<comment type="similarity">
    <text evidence="1">Belongs to the FAM25 family.</text>
</comment>
<accession>Q8CF02</accession>
<accession>B2RVA0</accession>
<proteinExistence type="evidence at protein level"/>
<dbReference type="EMBL" id="AK008614">
    <property type="protein sequence ID" value="BAC25225.1"/>
    <property type="molecule type" value="mRNA"/>
</dbReference>
<dbReference type="EMBL" id="BC147104">
    <property type="protein sequence ID" value="AAI47105.1"/>
    <property type="molecule type" value="mRNA"/>
</dbReference>
<dbReference type="EMBL" id="BC147105">
    <property type="protein sequence ID" value="AAI47106.1"/>
    <property type="molecule type" value="mRNA"/>
</dbReference>
<dbReference type="CCDS" id="CCDS36875.1"/>
<dbReference type="RefSeq" id="NP_899101.1">
    <property type="nucleotide sequence ID" value="NM_183278.3"/>
</dbReference>
<dbReference type="SMR" id="Q8CF02"/>
<dbReference type="BioGRID" id="213248">
    <property type="interactions" value="1"/>
</dbReference>
<dbReference type="FunCoup" id="Q8CF02">
    <property type="interactions" value="3"/>
</dbReference>
<dbReference type="STRING" id="10090.ENSMUSP00000063140"/>
<dbReference type="PaxDb" id="10090-ENSMUSP00000063140"/>
<dbReference type="PeptideAtlas" id="Q8CF02"/>
<dbReference type="ProteomicsDB" id="271785"/>
<dbReference type="Ensembl" id="ENSMUST00000052126.6">
    <property type="protein sequence ID" value="ENSMUSP00000063140.6"/>
    <property type="gene ID" value="ENSMUSG00000043681.6"/>
</dbReference>
<dbReference type="GeneID" id="69134"/>
<dbReference type="KEGG" id="mmu:69134"/>
<dbReference type="UCSC" id="uc007tat.1">
    <property type="organism name" value="mouse"/>
</dbReference>
<dbReference type="AGR" id="MGI:1916384"/>
<dbReference type="CTD" id="643161"/>
<dbReference type="MGI" id="MGI:1916384">
    <property type="gene designation" value="Fam25a"/>
</dbReference>
<dbReference type="VEuPathDB" id="HostDB:ENSMUSG00000043681"/>
<dbReference type="eggNOG" id="ENOG502SUWZ">
    <property type="taxonomic scope" value="Eukaryota"/>
</dbReference>
<dbReference type="GeneTree" id="ENSGT00390000000786"/>
<dbReference type="HOGENOM" id="CLU_2454157_0_0_1"/>
<dbReference type="InParanoid" id="Q8CF02"/>
<dbReference type="OMA" id="TNTIMHA"/>
<dbReference type="PhylomeDB" id="Q8CF02"/>
<dbReference type="TreeFam" id="TF336933"/>
<dbReference type="BioGRID-ORCS" id="69134">
    <property type="hits" value="3 hits in 77 CRISPR screens"/>
</dbReference>
<dbReference type="ChiTaRS" id="Fam25c">
    <property type="organism name" value="mouse"/>
</dbReference>
<dbReference type="PRO" id="PR:Q8CF02"/>
<dbReference type="Proteomes" id="UP000000589">
    <property type="component" value="Chromosome 14"/>
</dbReference>
<dbReference type="RNAct" id="Q8CF02">
    <property type="molecule type" value="protein"/>
</dbReference>
<dbReference type="Bgee" id="ENSMUSG00000043681">
    <property type="expression patterns" value="Expressed in urinary bladder urothelium and 107 other cell types or tissues"/>
</dbReference>
<dbReference type="InterPro" id="IPR023243">
    <property type="entry name" value="FAM25"/>
</dbReference>
<dbReference type="PANTHER" id="PTHR34994">
    <property type="entry name" value="PROTEIN FAM25A-RELATED"/>
    <property type="match status" value="1"/>
</dbReference>
<dbReference type="PANTHER" id="PTHR34994:SF1">
    <property type="entry name" value="PROTEIN FAM25A-RELATED"/>
    <property type="match status" value="1"/>
</dbReference>
<dbReference type="Pfam" id="PF15825">
    <property type="entry name" value="FAM25"/>
    <property type="match status" value="1"/>
</dbReference>
<dbReference type="PRINTS" id="PR02048">
    <property type="entry name" value="PROTEINF25"/>
</dbReference>
<keyword id="KW-1185">Reference proteome</keyword>
<organism>
    <name type="scientific">Mus musculus</name>
    <name type="common">Mouse</name>
    <dbReference type="NCBI Taxonomy" id="10090"/>
    <lineage>
        <taxon>Eukaryota</taxon>
        <taxon>Metazoa</taxon>
        <taxon>Chordata</taxon>
        <taxon>Craniata</taxon>
        <taxon>Vertebrata</taxon>
        <taxon>Euteleostomi</taxon>
        <taxon>Mammalia</taxon>
        <taxon>Eutheria</taxon>
        <taxon>Euarchontoglires</taxon>
        <taxon>Glires</taxon>
        <taxon>Rodentia</taxon>
        <taxon>Myomorpha</taxon>
        <taxon>Muroidea</taxon>
        <taxon>Muridae</taxon>
        <taxon>Murinae</taxon>
        <taxon>Mus</taxon>
        <taxon>Mus</taxon>
    </lineage>
</organism>
<evidence type="ECO:0000305" key="1"/>
<evidence type="ECO:0000312" key="2">
    <source>
        <dbReference type="MGI" id="MGI:1916384"/>
    </source>
</evidence>
<reference key="1">
    <citation type="journal article" date="2005" name="Science">
        <title>The transcriptional landscape of the mammalian genome.</title>
        <authorList>
            <person name="Carninci P."/>
            <person name="Kasukawa T."/>
            <person name="Katayama S."/>
            <person name="Gough J."/>
            <person name="Frith M.C."/>
            <person name="Maeda N."/>
            <person name="Oyama R."/>
            <person name="Ravasi T."/>
            <person name="Lenhard B."/>
            <person name="Wells C."/>
            <person name="Kodzius R."/>
            <person name="Shimokawa K."/>
            <person name="Bajic V.B."/>
            <person name="Brenner S.E."/>
            <person name="Batalov S."/>
            <person name="Forrest A.R."/>
            <person name="Zavolan M."/>
            <person name="Davis M.J."/>
            <person name="Wilming L.G."/>
            <person name="Aidinis V."/>
            <person name="Allen J.E."/>
            <person name="Ambesi-Impiombato A."/>
            <person name="Apweiler R."/>
            <person name="Aturaliya R.N."/>
            <person name="Bailey T.L."/>
            <person name="Bansal M."/>
            <person name="Baxter L."/>
            <person name="Beisel K.W."/>
            <person name="Bersano T."/>
            <person name="Bono H."/>
            <person name="Chalk A.M."/>
            <person name="Chiu K.P."/>
            <person name="Choudhary V."/>
            <person name="Christoffels A."/>
            <person name="Clutterbuck D.R."/>
            <person name="Crowe M.L."/>
            <person name="Dalla E."/>
            <person name="Dalrymple B.P."/>
            <person name="de Bono B."/>
            <person name="Della Gatta G."/>
            <person name="di Bernardo D."/>
            <person name="Down T."/>
            <person name="Engstrom P."/>
            <person name="Fagiolini M."/>
            <person name="Faulkner G."/>
            <person name="Fletcher C.F."/>
            <person name="Fukushima T."/>
            <person name="Furuno M."/>
            <person name="Futaki S."/>
            <person name="Gariboldi M."/>
            <person name="Georgii-Hemming P."/>
            <person name="Gingeras T.R."/>
            <person name="Gojobori T."/>
            <person name="Green R.E."/>
            <person name="Gustincich S."/>
            <person name="Harbers M."/>
            <person name="Hayashi Y."/>
            <person name="Hensch T.K."/>
            <person name="Hirokawa N."/>
            <person name="Hill D."/>
            <person name="Huminiecki L."/>
            <person name="Iacono M."/>
            <person name="Ikeo K."/>
            <person name="Iwama A."/>
            <person name="Ishikawa T."/>
            <person name="Jakt M."/>
            <person name="Kanapin A."/>
            <person name="Katoh M."/>
            <person name="Kawasawa Y."/>
            <person name="Kelso J."/>
            <person name="Kitamura H."/>
            <person name="Kitano H."/>
            <person name="Kollias G."/>
            <person name="Krishnan S.P."/>
            <person name="Kruger A."/>
            <person name="Kummerfeld S.K."/>
            <person name="Kurochkin I.V."/>
            <person name="Lareau L.F."/>
            <person name="Lazarevic D."/>
            <person name="Lipovich L."/>
            <person name="Liu J."/>
            <person name="Liuni S."/>
            <person name="McWilliam S."/>
            <person name="Madan Babu M."/>
            <person name="Madera M."/>
            <person name="Marchionni L."/>
            <person name="Matsuda H."/>
            <person name="Matsuzawa S."/>
            <person name="Miki H."/>
            <person name="Mignone F."/>
            <person name="Miyake S."/>
            <person name="Morris K."/>
            <person name="Mottagui-Tabar S."/>
            <person name="Mulder N."/>
            <person name="Nakano N."/>
            <person name="Nakauchi H."/>
            <person name="Ng P."/>
            <person name="Nilsson R."/>
            <person name="Nishiguchi S."/>
            <person name="Nishikawa S."/>
            <person name="Nori F."/>
            <person name="Ohara O."/>
            <person name="Okazaki Y."/>
            <person name="Orlando V."/>
            <person name="Pang K.C."/>
            <person name="Pavan W.J."/>
            <person name="Pavesi G."/>
            <person name="Pesole G."/>
            <person name="Petrovsky N."/>
            <person name="Piazza S."/>
            <person name="Reed J."/>
            <person name="Reid J.F."/>
            <person name="Ring B.Z."/>
            <person name="Ringwald M."/>
            <person name="Rost B."/>
            <person name="Ruan Y."/>
            <person name="Salzberg S.L."/>
            <person name="Sandelin A."/>
            <person name="Schneider C."/>
            <person name="Schoenbach C."/>
            <person name="Sekiguchi K."/>
            <person name="Semple C.A."/>
            <person name="Seno S."/>
            <person name="Sessa L."/>
            <person name="Sheng Y."/>
            <person name="Shibata Y."/>
            <person name="Shimada H."/>
            <person name="Shimada K."/>
            <person name="Silva D."/>
            <person name="Sinclair B."/>
            <person name="Sperling S."/>
            <person name="Stupka E."/>
            <person name="Sugiura K."/>
            <person name="Sultana R."/>
            <person name="Takenaka Y."/>
            <person name="Taki K."/>
            <person name="Tammoja K."/>
            <person name="Tan S.L."/>
            <person name="Tang S."/>
            <person name="Taylor M.S."/>
            <person name="Tegner J."/>
            <person name="Teichmann S.A."/>
            <person name="Ueda H.R."/>
            <person name="van Nimwegen E."/>
            <person name="Verardo R."/>
            <person name="Wei C.L."/>
            <person name="Yagi K."/>
            <person name="Yamanishi H."/>
            <person name="Zabarovsky E."/>
            <person name="Zhu S."/>
            <person name="Zimmer A."/>
            <person name="Hide W."/>
            <person name="Bult C."/>
            <person name="Grimmond S.M."/>
            <person name="Teasdale R.D."/>
            <person name="Liu E.T."/>
            <person name="Brusic V."/>
            <person name="Quackenbush J."/>
            <person name="Wahlestedt C."/>
            <person name="Mattick J.S."/>
            <person name="Hume D.A."/>
            <person name="Kai C."/>
            <person name="Sasaki D."/>
            <person name="Tomaru Y."/>
            <person name="Fukuda S."/>
            <person name="Kanamori-Katayama M."/>
            <person name="Suzuki M."/>
            <person name="Aoki J."/>
            <person name="Arakawa T."/>
            <person name="Iida J."/>
            <person name="Imamura K."/>
            <person name="Itoh M."/>
            <person name="Kato T."/>
            <person name="Kawaji H."/>
            <person name="Kawagashira N."/>
            <person name="Kawashima T."/>
            <person name="Kojima M."/>
            <person name="Kondo S."/>
            <person name="Konno H."/>
            <person name="Nakano K."/>
            <person name="Ninomiya N."/>
            <person name="Nishio T."/>
            <person name="Okada M."/>
            <person name="Plessy C."/>
            <person name="Shibata K."/>
            <person name="Shiraki T."/>
            <person name="Suzuki S."/>
            <person name="Tagami M."/>
            <person name="Waki K."/>
            <person name="Watahiki A."/>
            <person name="Okamura-Oho Y."/>
            <person name="Suzuki H."/>
            <person name="Kawai J."/>
            <person name="Hayashizaki Y."/>
        </authorList>
    </citation>
    <scope>NUCLEOTIDE SEQUENCE [LARGE SCALE MRNA]</scope>
    <source>
        <strain>C57BL/6J</strain>
        <tissue>Stomach</tissue>
    </source>
</reference>
<reference key="2">
    <citation type="journal article" date="2004" name="Genome Res.">
        <title>The status, quality, and expansion of the NIH full-length cDNA project: the Mammalian Gene Collection (MGC).</title>
        <authorList>
            <consortium name="The MGC Project Team"/>
        </authorList>
    </citation>
    <scope>NUCLEOTIDE SEQUENCE [LARGE SCALE MRNA]</scope>
    <source>
        <tissue>Brain</tissue>
    </source>
</reference>
<reference key="3">
    <citation type="journal article" date="2010" name="Cell">
        <title>A tissue-specific atlas of mouse protein phosphorylation and expression.</title>
        <authorList>
            <person name="Huttlin E.L."/>
            <person name="Jedrychowski M.P."/>
            <person name="Elias J.E."/>
            <person name="Goswami T."/>
            <person name="Rad R."/>
            <person name="Beausoleil S.A."/>
            <person name="Villen J."/>
            <person name="Haas W."/>
            <person name="Sowa M.E."/>
            <person name="Gygi S.P."/>
        </authorList>
    </citation>
    <scope>IDENTIFICATION BY MASS SPECTROMETRY [LARGE SCALE ANALYSIS]</scope>
    <source>
        <tissue>Liver</tissue>
    </source>
</reference>
<protein>
    <recommendedName>
        <fullName evidence="1">Protein FAM25A</fullName>
    </recommendedName>
    <alternativeName>
        <fullName evidence="1">Protein FAM25C</fullName>
    </alternativeName>
</protein>
<feature type="chain" id="PRO_0000270920" description="Protein FAM25A">
    <location>
        <begin position="1"/>
        <end position="89"/>
    </location>
</feature>
<sequence>MLGGLGKLAAEGLAHRTEKATEGAVHAVEEVVSEVVGHAKEVGEKAINDALKKAQESGDRVVKEVTEKVTHTITDAVTHAAEGLGRLGQ</sequence>
<name>FM25C_MOUSE</name>
<gene>
    <name evidence="2" type="primary">Fam25a</name>
    <name evidence="2" type="synonym">Fam25c</name>
</gene>